<proteinExistence type="evidence at protein level"/>
<evidence type="ECO:0000250" key="1">
    <source>
        <dbReference type="UniProtKB" id="Q8VBZ3"/>
    </source>
</evidence>
<evidence type="ECO:0000250" key="2">
    <source>
        <dbReference type="UniProtKB" id="Q96KA5"/>
    </source>
</evidence>
<evidence type="ECO:0000255" key="3"/>
<evidence type="ECO:0000256" key="4">
    <source>
        <dbReference type="SAM" id="MobiDB-lite"/>
    </source>
</evidence>
<evidence type="ECO:0000269" key="5">
    <source>
    </source>
</evidence>
<evidence type="ECO:0000269" key="6">
    <source>
    </source>
</evidence>
<evidence type="ECO:0000269" key="7">
    <source>
    </source>
</evidence>
<evidence type="ECO:0000269" key="8">
    <source>
    </source>
</evidence>
<evidence type="ECO:0000269" key="9">
    <source>
    </source>
</evidence>
<evidence type="ECO:0000269" key="10">
    <source>
    </source>
</evidence>
<evidence type="ECO:0000303" key="11">
    <source>
    </source>
</evidence>
<evidence type="ECO:0000305" key="12"/>
<evidence type="ECO:0007744" key="13">
    <source>
    </source>
</evidence>
<evidence type="ECO:0007744" key="14">
    <source>
    </source>
</evidence>
<sequence length="669" mass="76097">MAAAQEADGARSAVVAAGGGSSGQVTSNGSIGRDPPAETQPQNPPAQPAPNAWQVIKGVLFRIFIIWAISSWFRRGPAPQDQAGPGGAPRVASRNLFPKDTLMNLHVYISEHEHFTDFNATSALFWEQHDLVYGDWTSGENSDGCYEHFAELDIPQSVQQNGSIYIHVYFTKSGFHPDPRQKALYRRLATVHMSRMINKYKRRRFQKTKNLLTGETEADPEMIKRAEDYGPVEVISHWHPNITINIVDDHTPWVKGSVPPPLDQYVKFDAVSGDYYPIIYFNDYWNLQKDYYPINESLASLPLRVSFCPLSLWRWQLYAAQSTKSPWNFLGDELYEQSDEEQDSVKVALLETNPYLLALTIIVSIVHSVFEFLAFKNDIQFWNSRQSLEGLSVRSVFFGVFQSFVVLLYILDNETNFVVQVSVFIGVLIDLWKITKVMDVRLDREHRVAGIFPRLSFKDKSTYIESSTKVYDDMAFRYLSWILFPLLGCYAVYSLLYLEHKGWYSWVLSMLYGFLLTFGFITMTPQLFINYKLKSVAHLPWRMLTYKALNTFIDDLFAFVIKMPVMYRIGCLRDDVVFFIYLYQRWIYRVDPTRVNEFGMSGEDPTAAAPVAEVPTAAGALTPTPAPTTTTATREEASTSLPTKPTQGASSASEPQEAPPKPAEDKKKD</sequence>
<reference key="1">
    <citation type="journal article" date="1998" name="Genomics">
        <title>Characterization of a novel gene disrupted by a balanced chromosomal translocation t(2;19)(q11.2;q13.3) in a family with cleft lip and palate.</title>
        <authorList>
            <person name="Yoshiura K."/>
            <person name="Machida J."/>
            <person name="Daack-Hirsch S."/>
            <person name="Patil S.R."/>
            <person name="Ashworth L.K."/>
            <person name="Hecht J.T."/>
            <person name="Murray J.C."/>
        </authorList>
    </citation>
    <scope>NUCLEOTIDE SEQUENCE [GENOMIC DNA / MRNA] (ISOFORM 1)</scope>
    <scope>CHROMOSOMAL TRANSLOCATION</scope>
    <scope>TISSUE SPECIFICITY</scope>
    <scope>POLYMORPHISM</scope>
    <source>
        <tissue>Craniofacial</tissue>
    </source>
</reference>
<reference key="2">
    <citation type="journal article" date="2004" name="Nat. Genet.">
        <title>Complete sequencing and characterization of 21,243 full-length human cDNAs.</title>
        <authorList>
            <person name="Ota T."/>
            <person name="Suzuki Y."/>
            <person name="Nishikawa T."/>
            <person name="Otsuki T."/>
            <person name="Sugiyama T."/>
            <person name="Irie R."/>
            <person name="Wakamatsu A."/>
            <person name="Hayashi K."/>
            <person name="Sato H."/>
            <person name="Nagai K."/>
            <person name="Kimura K."/>
            <person name="Makita H."/>
            <person name="Sekine M."/>
            <person name="Obayashi M."/>
            <person name="Nishi T."/>
            <person name="Shibahara T."/>
            <person name="Tanaka T."/>
            <person name="Ishii S."/>
            <person name="Yamamoto J."/>
            <person name="Saito K."/>
            <person name="Kawai Y."/>
            <person name="Isono Y."/>
            <person name="Nakamura Y."/>
            <person name="Nagahari K."/>
            <person name="Murakami K."/>
            <person name="Yasuda T."/>
            <person name="Iwayanagi T."/>
            <person name="Wagatsuma M."/>
            <person name="Shiratori A."/>
            <person name="Sudo H."/>
            <person name="Hosoiri T."/>
            <person name="Kaku Y."/>
            <person name="Kodaira H."/>
            <person name="Kondo H."/>
            <person name="Sugawara M."/>
            <person name="Takahashi M."/>
            <person name="Kanda K."/>
            <person name="Yokoi T."/>
            <person name="Furuya T."/>
            <person name="Kikkawa E."/>
            <person name="Omura Y."/>
            <person name="Abe K."/>
            <person name="Kamihara K."/>
            <person name="Katsuta N."/>
            <person name="Sato K."/>
            <person name="Tanikawa M."/>
            <person name="Yamazaki M."/>
            <person name="Ninomiya K."/>
            <person name="Ishibashi T."/>
            <person name="Yamashita H."/>
            <person name="Murakawa K."/>
            <person name="Fujimori K."/>
            <person name="Tanai H."/>
            <person name="Kimata M."/>
            <person name="Watanabe M."/>
            <person name="Hiraoka S."/>
            <person name="Chiba Y."/>
            <person name="Ishida S."/>
            <person name="Ono Y."/>
            <person name="Takiguchi S."/>
            <person name="Watanabe S."/>
            <person name="Yosida M."/>
            <person name="Hotuta T."/>
            <person name="Kusano J."/>
            <person name="Kanehori K."/>
            <person name="Takahashi-Fujii A."/>
            <person name="Hara H."/>
            <person name="Tanase T.-O."/>
            <person name="Nomura Y."/>
            <person name="Togiya S."/>
            <person name="Komai F."/>
            <person name="Hara R."/>
            <person name="Takeuchi K."/>
            <person name="Arita M."/>
            <person name="Imose N."/>
            <person name="Musashino K."/>
            <person name="Yuuki H."/>
            <person name="Oshima A."/>
            <person name="Sasaki N."/>
            <person name="Aotsuka S."/>
            <person name="Yoshikawa Y."/>
            <person name="Matsunawa H."/>
            <person name="Ichihara T."/>
            <person name="Shiohata N."/>
            <person name="Sano S."/>
            <person name="Moriya S."/>
            <person name="Momiyama H."/>
            <person name="Satoh N."/>
            <person name="Takami S."/>
            <person name="Terashima Y."/>
            <person name="Suzuki O."/>
            <person name="Nakagawa S."/>
            <person name="Senoh A."/>
            <person name="Mizoguchi H."/>
            <person name="Goto Y."/>
            <person name="Shimizu F."/>
            <person name="Wakebe H."/>
            <person name="Hishigaki H."/>
            <person name="Watanabe T."/>
            <person name="Sugiyama A."/>
            <person name="Takemoto M."/>
            <person name="Kawakami B."/>
            <person name="Yamazaki M."/>
            <person name="Watanabe K."/>
            <person name="Kumagai A."/>
            <person name="Itakura S."/>
            <person name="Fukuzumi Y."/>
            <person name="Fujimori Y."/>
            <person name="Komiyama M."/>
            <person name="Tashiro H."/>
            <person name="Tanigami A."/>
            <person name="Fujiwara T."/>
            <person name="Ono T."/>
            <person name="Yamada K."/>
            <person name="Fujii Y."/>
            <person name="Ozaki K."/>
            <person name="Hirao M."/>
            <person name="Ohmori Y."/>
            <person name="Kawabata A."/>
            <person name="Hikiji T."/>
            <person name="Kobatake N."/>
            <person name="Inagaki H."/>
            <person name="Ikema Y."/>
            <person name="Okamoto S."/>
            <person name="Okitani R."/>
            <person name="Kawakami T."/>
            <person name="Noguchi S."/>
            <person name="Itoh T."/>
            <person name="Shigeta K."/>
            <person name="Senba T."/>
            <person name="Matsumura K."/>
            <person name="Nakajima Y."/>
            <person name="Mizuno T."/>
            <person name="Morinaga M."/>
            <person name="Sasaki M."/>
            <person name="Togashi T."/>
            <person name="Oyama M."/>
            <person name="Hata H."/>
            <person name="Watanabe M."/>
            <person name="Komatsu T."/>
            <person name="Mizushima-Sugano J."/>
            <person name="Satoh T."/>
            <person name="Shirai Y."/>
            <person name="Takahashi Y."/>
            <person name="Nakagawa K."/>
            <person name="Okumura K."/>
            <person name="Nagase T."/>
            <person name="Nomura N."/>
            <person name="Kikuchi H."/>
            <person name="Masuho Y."/>
            <person name="Yamashita R."/>
            <person name="Nakai K."/>
            <person name="Yada T."/>
            <person name="Nakamura Y."/>
            <person name="Ohara O."/>
            <person name="Isogai T."/>
            <person name="Sugano S."/>
        </authorList>
    </citation>
    <scope>NUCLEOTIDE SEQUENCE [LARGE SCALE MRNA] (ISOFORMS 2 AND 3)</scope>
    <scope>VARIANT CYS-478</scope>
    <source>
        <tissue>Thalamus</tissue>
        <tissue>Uterus</tissue>
    </source>
</reference>
<reference key="3">
    <citation type="journal article" date="2005" name="DNA Res.">
        <title>Signal sequence and keyword trap in silico for selection of full-length human cDNAs encoding secretion or membrane proteins from oligo-capped cDNA libraries.</title>
        <authorList>
            <person name="Otsuki T."/>
            <person name="Ota T."/>
            <person name="Nishikawa T."/>
            <person name="Hayashi K."/>
            <person name="Suzuki Y."/>
            <person name="Yamamoto J."/>
            <person name="Wakamatsu A."/>
            <person name="Kimura K."/>
            <person name="Sakamoto K."/>
            <person name="Hatano N."/>
            <person name="Kawai Y."/>
            <person name="Ishii S."/>
            <person name="Saito K."/>
            <person name="Kojima S."/>
            <person name="Sugiyama T."/>
            <person name="Ono T."/>
            <person name="Okano K."/>
            <person name="Yoshikawa Y."/>
            <person name="Aotsuka S."/>
            <person name="Sasaki N."/>
            <person name="Hattori A."/>
            <person name="Okumura K."/>
            <person name="Nagai K."/>
            <person name="Sugano S."/>
            <person name="Isogai T."/>
        </authorList>
    </citation>
    <scope>NUCLEOTIDE SEQUENCE [LARGE SCALE MRNA] (ISOFORM 1)</scope>
</reference>
<reference key="4">
    <citation type="submission" date="2005-04" db="EMBL/GenBank/DDBJ databases">
        <authorList>
            <person name="Totoki Y."/>
            <person name="Toyoda A."/>
            <person name="Takeda T."/>
            <person name="Sakaki Y."/>
            <person name="Tanaka A."/>
            <person name="Yokoyama S."/>
        </authorList>
    </citation>
    <scope>NUCLEOTIDE SEQUENCE [LARGE SCALE MRNA] (ISOFORM 1)</scope>
    <source>
        <tissue>Kidney</tissue>
    </source>
</reference>
<reference key="5">
    <citation type="journal article" date="2004" name="Nature">
        <title>The DNA sequence and biology of human chromosome 19.</title>
        <authorList>
            <person name="Grimwood J."/>
            <person name="Gordon L.A."/>
            <person name="Olsen A.S."/>
            <person name="Terry A."/>
            <person name="Schmutz J."/>
            <person name="Lamerdin J.E."/>
            <person name="Hellsten U."/>
            <person name="Goodstein D."/>
            <person name="Couronne O."/>
            <person name="Tran-Gyamfi M."/>
            <person name="Aerts A."/>
            <person name="Altherr M."/>
            <person name="Ashworth L."/>
            <person name="Bajorek E."/>
            <person name="Black S."/>
            <person name="Branscomb E."/>
            <person name="Caenepeel S."/>
            <person name="Carrano A.V."/>
            <person name="Caoile C."/>
            <person name="Chan Y.M."/>
            <person name="Christensen M."/>
            <person name="Cleland C.A."/>
            <person name="Copeland A."/>
            <person name="Dalin E."/>
            <person name="Dehal P."/>
            <person name="Denys M."/>
            <person name="Detter J.C."/>
            <person name="Escobar J."/>
            <person name="Flowers D."/>
            <person name="Fotopulos D."/>
            <person name="Garcia C."/>
            <person name="Georgescu A.M."/>
            <person name="Glavina T."/>
            <person name="Gomez M."/>
            <person name="Gonzales E."/>
            <person name="Groza M."/>
            <person name="Hammon N."/>
            <person name="Hawkins T."/>
            <person name="Haydu L."/>
            <person name="Ho I."/>
            <person name="Huang W."/>
            <person name="Israni S."/>
            <person name="Jett J."/>
            <person name="Kadner K."/>
            <person name="Kimball H."/>
            <person name="Kobayashi A."/>
            <person name="Larionov V."/>
            <person name="Leem S.-H."/>
            <person name="Lopez F."/>
            <person name="Lou Y."/>
            <person name="Lowry S."/>
            <person name="Malfatti S."/>
            <person name="Martinez D."/>
            <person name="McCready P.M."/>
            <person name="Medina C."/>
            <person name="Morgan J."/>
            <person name="Nelson K."/>
            <person name="Nolan M."/>
            <person name="Ovcharenko I."/>
            <person name="Pitluck S."/>
            <person name="Pollard M."/>
            <person name="Popkie A.P."/>
            <person name="Predki P."/>
            <person name="Quan G."/>
            <person name="Ramirez L."/>
            <person name="Rash S."/>
            <person name="Retterer J."/>
            <person name="Rodriguez A."/>
            <person name="Rogers S."/>
            <person name="Salamov A."/>
            <person name="Salazar A."/>
            <person name="She X."/>
            <person name="Smith D."/>
            <person name="Slezak T."/>
            <person name="Solovyev V."/>
            <person name="Thayer N."/>
            <person name="Tice H."/>
            <person name="Tsai M."/>
            <person name="Ustaszewska A."/>
            <person name="Vo N."/>
            <person name="Wagner M."/>
            <person name="Wheeler J."/>
            <person name="Wu K."/>
            <person name="Xie G."/>
            <person name="Yang J."/>
            <person name="Dubchak I."/>
            <person name="Furey T.S."/>
            <person name="DeJong P."/>
            <person name="Dickson M."/>
            <person name="Gordon D."/>
            <person name="Eichler E.E."/>
            <person name="Pennacchio L.A."/>
            <person name="Richardson P."/>
            <person name="Stubbs L."/>
            <person name="Rokhsar D.S."/>
            <person name="Myers R.M."/>
            <person name="Rubin E.M."/>
            <person name="Lucas S.M."/>
        </authorList>
    </citation>
    <scope>NUCLEOTIDE SEQUENCE [LARGE SCALE GENOMIC DNA]</scope>
</reference>
<reference key="6">
    <citation type="submission" date="2005-07" db="EMBL/GenBank/DDBJ databases">
        <authorList>
            <person name="Mural R.J."/>
            <person name="Istrail S."/>
            <person name="Sutton G."/>
            <person name="Florea L."/>
            <person name="Halpern A.L."/>
            <person name="Mobarry C.M."/>
            <person name="Lippert R."/>
            <person name="Walenz B."/>
            <person name="Shatkay H."/>
            <person name="Dew I."/>
            <person name="Miller J.R."/>
            <person name="Flanigan M.J."/>
            <person name="Edwards N.J."/>
            <person name="Bolanos R."/>
            <person name="Fasulo D."/>
            <person name="Halldorsson B.V."/>
            <person name="Hannenhalli S."/>
            <person name="Turner R."/>
            <person name="Yooseph S."/>
            <person name="Lu F."/>
            <person name="Nusskern D.R."/>
            <person name="Shue B.C."/>
            <person name="Zheng X.H."/>
            <person name="Zhong F."/>
            <person name="Delcher A.L."/>
            <person name="Huson D.H."/>
            <person name="Kravitz S.A."/>
            <person name="Mouchard L."/>
            <person name="Reinert K."/>
            <person name="Remington K.A."/>
            <person name="Clark A.G."/>
            <person name="Waterman M.S."/>
            <person name="Eichler E.E."/>
            <person name="Adams M.D."/>
            <person name="Hunkapiller M.W."/>
            <person name="Myers E.W."/>
            <person name="Venter J.C."/>
        </authorList>
    </citation>
    <scope>NUCLEOTIDE SEQUENCE [LARGE SCALE GENOMIC DNA]</scope>
</reference>
<reference key="7">
    <citation type="journal article" date="2004" name="Genome Res.">
        <title>The status, quality, and expansion of the NIH full-length cDNA project: the Mammalian Gene Collection (MGC).</title>
        <authorList>
            <consortium name="The MGC Project Team"/>
        </authorList>
    </citation>
    <scope>NUCLEOTIDE SEQUENCE [LARGE SCALE MRNA] (ISOFORM 1)</scope>
    <source>
        <tissue>Choriocarcinoma</tissue>
        <tissue>Melanoma</tissue>
    </source>
</reference>
<reference key="8">
    <citation type="submission" date="2003-05" db="EMBL/GenBank/DDBJ databases">
        <title>Cloning of human full-length CDSs in BD Creator(TM) system donor vector.</title>
        <authorList>
            <person name="Kalnine N."/>
            <person name="Chen X."/>
            <person name="Rolfs A."/>
            <person name="Halleck A."/>
            <person name="Hines L."/>
            <person name="Eisenstein S."/>
            <person name="Koundinya M."/>
            <person name="Raphael J."/>
            <person name="Moreira D."/>
            <person name="Kelley T."/>
            <person name="LaBaer J."/>
            <person name="Lin Y."/>
            <person name="Phelan M."/>
            <person name="Farmer A."/>
        </authorList>
    </citation>
    <scope>NUCLEOTIDE SEQUENCE [LARGE SCALE MRNA] OF 1-656 (ISOFORM 1)</scope>
</reference>
<reference key="9">
    <citation type="journal article" date="2006" name="Mol. Cell. Proteomics">
        <title>Elucidation of N-glycosylation sites on human platelet proteins: a glycoproteomic approach.</title>
        <authorList>
            <person name="Lewandrowski U."/>
            <person name="Moebius J."/>
            <person name="Walter U."/>
            <person name="Sickmann A."/>
        </authorList>
    </citation>
    <scope>GLYCOSYLATION [LARGE SCALE ANALYSIS] AT ASN-295</scope>
    <source>
        <tissue>Platelet</tissue>
    </source>
</reference>
<reference key="10">
    <citation type="journal article" date="2009" name="J. Proteome Res.">
        <title>Glycoproteomics analysis of human liver tissue by combination of multiple enzyme digestion and hydrazide chemistry.</title>
        <authorList>
            <person name="Chen R."/>
            <person name="Jiang X."/>
            <person name="Sun D."/>
            <person name="Han G."/>
            <person name="Wang F."/>
            <person name="Ye M."/>
            <person name="Wang L."/>
            <person name="Zou H."/>
        </authorList>
    </citation>
    <scope>GLYCOSYLATION [LARGE SCALE ANALYSIS] AT ASN-295</scope>
    <source>
        <tissue>Liver</tissue>
    </source>
</reference>
<reference key="11">
    <citation type="journal article" date="2011" name="BMC Syst. Biol.">
        <title>Initial characterization of the human central proteome.</title>
        <authorList>
            <person name="Burkard T.R."/>
            <person name="Planyavsky M."/>
            <person name="Kaupe I."/>
            <person name="Breitwieser F.P."/>
            <person name="Buerckstuemmer T."/>
            <person name="Bennett K.L."/>
            <person name="Superti-Furga G."/>
            <person name="Colinge J."/>
        </authorList>
    </citation>
    <scope>IDENTIFICATION BY MASS SPECTROMETRY [LARGE SCALE ANALYSIS]</scope>
</reference>
<reference key="12">
    <citation type="journal article" date="2012" name="Proc. Natl. Acad. Sci. U.S.A.">
        <title>N-terminal acetylome analyses and functional insights of the N-terminal acetyltransferase NatB.</title>
        <authorList>
            <person name="Van Damme P."/>
            <person name="Lasa M."/>
            <person name="Polevoda B."/>
            <person name="Gazquez C."/>
            <person name="Elosegui-Artola A."/>
            <person name="Kim D.S."/>
            <person name="De Juan-Pardo E."/>
            <person name="Demeyer K."/>
            <person name="Hole K."/>
            <person name="Larrea E."/>
            <person name="Timmerman E."/>
            <person name="Prieto J."/>
            <person name="Arnesen T."/>
            <person name="Sherman F."/>
            <person name="Gevaert K."/>
            <person name="Aldabe R."/>
        </authorList>
    </citation>
    <scope>ACETYLATION [LARGE SCALE ANALYSIS] AT ALA-2</scope>
    <scope>CLEAVAGE OF INITIATOR METHIONINE [LARGE SCALE ANALYSIS]</scope>
    <scope>IDENTIFICATION BY MASS SPECTROMETRY [LARGE SCALE ANALYSIS]</scope>
</reference>
<reference key="13">
    <citation type="journal article" date="2014" name="J. Proteomics">
        <title>An enzyme assisted RP-RPLC approach for in-depth analysis of human liver phosphoproteome.</title>
        <authorList>
            <person name="Bian Y."/>
            <person name="Song C."/>
            <person name="Cheng K."/>
            <person name="Dong M."/>
            <person name="Wang F."/>
            <person name="Huang J."/>
            <person name="Sun D."/>
            <person name="Wang L."/>
            <person name="Ye M."/>
            <person name="Zou H."/>
        </authorList>
    </citation>
    <scope>PHOSPHORYLATION [LARGE SCALE ANALYSIS] AT SER-601</scope>
    <scope>IDENTIFICATION BY MASS SPECTROMETRY [LARGE SCALE ANALYSIS]</scope>
    <source>
        <tissue>Liver</tissue>
    </source>
</reference>
<reference key="14">
    <citation type="journal article" date="2015" name="Hum. Mol. Genet.">
        <title>Biochemical and cellular analysis of Ogden syndrome reveals downstream Nt-acetylation defects.</title>
        <authorList>
            <person name="Myklebust L.M."/>
            <person name="Van Damme P."/>
            <person name="Stoeve S.I."/>
            <person name="Doerfel M.J."/>
            <person name="Abboud A."/>
            <person name="Kalvik T.V."/>
            <person name="Grauffel C."/>
            <person name="Jonckheere V."/>
            <person name="Wu Y."/>
            <person name="Swensen J."/>
            <person name="Kaasa H."/>
            <person name="Liszczak G."/>
            <person name="Marmorstein R."/>
            <person name="Reuter N."/>
            <person name="Lyon G.J."/>
            <person name="Gevaert K."/>
            <person name="Arnesen T."/>
        </authorList>
    </citation>
    <scope>ACETYLATION AT ALA-2</scope>
    <scope>CLEAVAGE OF INITIATOR METHIONINE</scope>
</reference>
<reference key="15">
    <citation type="journal article" date="2018" name="J. Cell Biol.">
        <title>N-Glycan-dependent protein folding and endoplasmic reticulum retention regulate GPI-anchor processing.</title>
        <authorList>
            <person name="Liu Y.S."/>
            <person name="Guo X.Y."/>
            <person name="Hirata T."/>
            <person name="Rong Y."/>
            <person name="Motooka D."/>
            <person name="Kitajima T."/>
            <person name="Murakami Y."/>
            <person name="Gao X.D."/>
            <person name="Nakamura S."/>
            <person name="Kinoshita T."/>
            <person name="Fujita M."/>
        </authorList>
    </citation>
    <scope>FUNCTION</scope>
</reference>
<organism>
    <name type="scientific">Homo sapiens</name>
    <name type="common">Human</name>
    <dbReference type="NCBI Taxonomy" id="9606"/>
    <lineage>
        <taxon>Eukaryota</taxon>
        <taxon>Metazoa</taxon>
        <taxon>Chordata</taxon>
        <taxon>Craniata</taxon>
        <taxon>Vertebrata</taxon>
        <taxon>Euteleostomi</taxon>
        <taxon>Mammalia</taxon>
        <taxon>Eutheria</taxon>
        <taxon>Euarchontoglires</taxon>
        <taxon>Primates</taxon>
        <taxon>Haplorrhini</taxon>
        <taxon>Catarrhini</taxon>
        <taxon>Hominidae</taxon>
        <taxon>Homo</taxon>
    </lineage>
</organism>
<keyword id="KW-0007">Acetylation</keyword>
<keyword id="KW-0025">Alternative splicing</keyword>
<keyword id="KW-0160">Chromosomal rearrangement</keyword>
<keyword id="KW-0217">Developmental protein</keyword>
<keyword id="KW-0221">Differentiation</keyword>
<keyword id="KW-0325">Glycoprotein</keyword>
<keyword id="KW-0472">Membrane</keyword>
<keyword id="KW-0597">Phosphoprotein</keyword>
<keyword id="KW-1267">Proteomics identification</keyword>
<keyword id="KW-1185">Reference proteome</keyword>
<keyword id="KW-0812">Transmembrane</keyword>
<keyword id="KW-1133">Transmembrane helix</keyword>
<accession>O96005</accession>
<accession>B3KQH2</accession>
<accession>B4DDS3</accession>
<accession>B4E2X9</accession>
<accession>B7Z9X9</accession>
<accession>F5H8J3</accession>
<accession>Q53ET6</accession>
<accession>Q9BSS5</accession>
<comment type="function">
    <text evidence="1 2 9">Involved in GABAergic but not glutamatergic transmission. Binds and traps GABAA receptors in the endoplasmic reticulum (ER). Modulates postsynaptic GABAergic transmission, and therefore inhibitory neurotransmission, by reducing the plasma membrane expression of these receptors. Altered GABAergic signaling is one among many causes of cleft palate (By similarity). Might function as a lipid scramblase, translocating lipids in membranes from one leaflet to the other one (By similarity). Required for efficient glycosylphosphatidylinositol (GPI) inositol deacylation in the ER, which is a crucial step to switch GPI-anchored proteins (GPI-APs) from protein folding to transport states (PubMed:29255114). May play a role in T-cell development (By similarity).</text>
</comment>
<comment type="interaction">
    <interactant intactId="EBI-2873194">
        <id>O96005</id>
    </interactant>
    <interactant intactId="EBI-13130472">
        <id>P31213</id>
        <label>SRD5A2</label>
    </interactant>
    <organismsDiffer>false</organismsDiffer>
    <experiments>3</experiments>
</comment>
<comment type="interaction">
    <interactant intactId="EBI-2873194">
        <id>O96005</id>
    </interactant>
    <interactant intactId="EBI-6116986">
        <id>Q8VCW4</id>
        <label>Unc93b1</label>
    </interactant>
    <organismsDiffer>true</organismsDiffer>
    <experiments>2</experiments>
</comment>
<comment type="subcellular location">
    <subcellularLocation>
        <location evidence="12">Membrane</location>
        <topology evidence="3">Multi-pass membrane protein</topology>
    </subcellularLocation>
</comment>
<comment type="alternative products">
    <event type="alternative splicing"/>
    <isoform>
        <id>O96005-1</id>
        <name>1</name>
        <sequence type="displayed"/>
    </isoform>
    <isoform>
        <id>O96005-3</id>
        <name>2</name>
        <sequence type="described" ref="VSP_055525"/>
    </isoform>
    <isoform>
        <id>O96005-4</id>
        <name>3</name>
        <sequence type="described" ref="VSP_055526"/>
    </isoform>
</comment>
<comment type="tissue specificity">
    <text evidence="10">Widely expressed.</text>
</comment>
<comment type="polymorphism">
    <text evidence="10">A chromosomal translocation involving CLPTM1 is found in a family with cleft lip and palate. However, no etiologic link with the disease is characterized. Translocation t(2;19)(q11.2;q13.3).</text>
</comment>
<comment type="similarity">
    <text evidence="12">Belongs to the CLPTM1 family.</text>
</comment>
<comment type="sequence caution" evidence="12">
    <conflict type="miscellaneous discrepancy">
        <sequence resource="EMBL-CDS" id="AAH04865"/>
    </conflict>
    <text>Aberrant splicing.</text>
</comment>
<comment type="sequence caution" evidence="12">
    <conflict type="miscellaneous discrepancy">
        <sequence resource="EMBL-CDS" id="AAP35926"/>
    </conflict>
    <text>Aberrant splicing.</text>
</comment>
<feature type="initiator methionine" description="Removed" evidence="8 13">
    <location>
        <position position="1"/>
    </location>
</feature>
<feature type="chain" id="PRO_0000245096" description="Putative lipid scramblase CLPTM1">
    <location>
        <begin position="2"/>
        <end position="669"/>
    </location>
</feature>
<feature type="topological domain" description="Extracellular" evidence="3">
    <location>
        <begin position="2"/>
        <end position="354"/>
    </location>
</feature>
<feature type="transmembrane region" description="Helical" evidence="3">
    <location>
        <begin position="355"/>
        <end position="375"/>
    </location>
</feature>
<feature type="topological domain" description="Cytoplasmic" evidence="3">
    <location>
        <begin position="376"/>
        <end position="390"/>
    </location>
</feature>
<feature type="transmembrane region" description="Helical" evidence="3">
    <location>
        <begin position="391"/>
        <end position="411"/>
    </location>
</feature>
<feature type="topological domain" description="Extracellular" evidence="3">
    <location>
        <begin position="412"/>
        <end position="416"/>
    </location>
</feature>
<feature type="transmembrane region" description="Helical" evidence="3">
    <location>
        <begin position="417"/>
        <end position="437"/>
    </location>
</feature>
<feature type="topological domain" description="Cytoplasmic" evidence="3">
    <location>
        <begin position="438"/>
        <end position="477"/>
    </location>
</feature>
<feature type="transmembrane region" description="Helical" evidence="3">
    <location>
        <begin position="478"/>
        <end position="498"/>
    </location>
</feature>
<feature type="topological domain" description="Extracellular" evidence="3">
    <location>
        <begin position="499"/>
        <end position="502"/>
    </location>
</feature>
<feature type="transmembrane region" description="Helical" evidence="3">
    <location>
        <begin position="503"/>
        <end position="523"/>
    </location>
</feature>
<feature type="topological domain" description="Cytoplasmic" evidence="3">
    <location>
        <begin position="524"/>
        <end position="669"/>
    </location>
</feature>
<feature type="region of interest" description="Disordered" evidence="4">
    <location>
        <begin position="1"/>
        <end position="50"/>
    </location>
</feature>
<feature type="region of interest" description="Disordered" evidence="4">
    <location>
        <begin position="614"/>
        <end position="669"/>
    </location>
</feature>
<feature type="compositionally biased region" description="Low complexity" evidence="4">
    <location>
        <begin position="614"/>
        <end position="632"/>
    </location>
</feature>
<feature type="compositionally biased region" description="Polar residues" evidence="4">
    <location>
        <begin position="638"/>
        <end position="648"/>
    </location>
</feature>
<feature type="modified residue" description="N-acetylalanine" evidence="8 13">
    <location>
        <position position="2"/>
    </location>
</feature>
<feature type="modified residue" description="Phosphoserine" evidence="14">
    <location>
        <position position="601"/>
    </location>
</feature>
<feature type="glycosylation site" description="N-linked (GlcNAc...) asparagine" evidence="3">
    <location>
        <position position="28"/>
    </location>
</feature>
<feature type="glycosylation site" description="N-linked (GlcNAc...) asparagine" evidence="3">
    <location>
        <position position="119"/>
    </location>
</feature>
<feature type="glycosylation site" description="N-linked (GlcNAc...) asparagine" evidence="3">
    <location>
        <position position="161"/>
    </location>
</feature>
<feature type="glycosylation site" description="N-linked (GlcNAc...) asparagine" evidence="3">
    <location>
        <position position="241"/>
    </location>
</feature>
<feature type="glycosylation site" description="N-linked (GlcNAc...) asparagine" evidence="6 7">
    <location>
        <position position="295"/>
    </location>
</feature>
<feature type="glycosylation site" description="N-linked (GlcNAc...) asparagine" evidence="3">
    <location>
        <position position="413"/>
    </location>
</feature>
<feature type="splice variant" id="VSP_055525" description="In isoform 2." evidence="11">
    <location>
        <begin position="1"/>
        <end position="102"/>
    </location>
</feature>
<feature type="splice variant" id="VSP_055526" description="In isoform 3." evidence="11">
    <original>MAAAQEADGARSAVVAAGGGSSGQ</original>
    <variation>MSRKAHITEK</variation>
    <location>
        <begin position="1"/>
        <end position="24"/>
    </location>
</feature>
<feature type="sequence variant" id="VAR_071064" description="In dbSNP:rs140564801." evidence="5">
    <original>Y</original>
    <variation>C</variation>
    <location>
        <position position="478"/>
    </location>
</feature>
<feature type="sequence conflict" description="In Ref. 2; BAG65291." evidence="12" ref="2">
    <original>M</original>
    <variation>V</variation>
    <location>
        <position position="103"/>
    </location>
</feature>
<feature type="sequence conflict" description="In Ref. 2; BAG65291." evidence="12" ref="2">
    <original>F</original>
    <variation>S</variation>
    <location>
        <position position="175"/>
    </location>
</feature>
<feature type="sequence conflict" description="In Ref. 2; BAH14465." evidence="12" ref="2">
    <original>W</original>
    <variation>R</variation>
    <location>
        <position position="327"/>
    </location>
</feature>
<feature type="sequence conflict" description="In Ref. 3; BAG52034." evidence="12" ref="3">
    <original>S</original>
    <variation>G</variation>
    <location>
        <position position="494"/>
    </location>
</feature>
<feature type="sequence conflict" description="In Ref. 4; BAD97273." evidence="12" ref="4">
    <original>A</original>
    <variation>T</variation>
    <location>
        <position position="637"/>
    </location>
</feature>
<name>CLPT1_HUMAN</name>
<gene>
    <name type="primary">CLPTM1</name>
</gene>
<dbReference type="EMBL" id="AF037338">
    <property type="protein sequence ID" value="AAC97420.1"/>
    <property type="molecule type" value="Genomic_DNA"/>
</dbReference>
<dbReference type="EMBL" id="AF037339">
    <property type="protein sequence ID" value="AAC98151.1"/>
    <property type="molecule type" value="mRNA"/>
</dbReference>
<dbReference type="EMBL" id="AK293314">
    <property type="protein sequence ID" value="BAG56834.1"/>
    <property type="molecule type" value="mRNA"/>
</dbReference>
<dbReference type="EMBL" id="AK304480">
    <property type="protein sequence ID" value="BAG65291.1"/>
    <property type="molecule type" value="mRNA"/>
</dbReference>
<dbReference type="EMBL" id="AK316094">
    <property type="protein sequence ID" value="BAH14465.1"/>
    <property type="molecule type" value="mRNA"/>
</dbReference>
<dbReference type="EMBL" id="AK074935">
    <property type="protein sequence ID" value="BAG52034.1"/>
    <property type="molecule type" value="mRNA"/>
</dbReference>
<dbReference type="EMBL" id="AK223553">
    <property type="protein sequence ID" value="BAD97273.1"/>
    <property type="molecule type" value="mRNA"/>
</dbReference>
<dbReference type="EMBL" id="AC011481">
    <property type="status" value="NOT_ANNOTATED_CDS"/>
    <property type="molecule type" value="Genomic_DNA"/>
</dbReference>
<dbReference type="EMBL" id="CH471126">
    <property type="protein sequence ID" value="EAW57314.1"/>
    <property type="molecule type" value="Genomic_DNA"/>
</dbReference>
<dbReference type="EMBL" id="BC004865">
    <property type="protein sequence ID" value="AAH04865.1"/>
    <property type="status" value="ALT_SEQ"/>
    <property type="molecule type" value="mRNA"/>
</dbReference>
<dbReference type="EMBL" id="BC012359">
    <property type="protein sequence ID" value="AAH12359.1"/>
    <property type="molecule type" value="mRNA"/>
</dbReference>
<dbReference type="EMBL" id="BT007262">
    <property type="protein sequence ID" value="AAP35926.1"/>
    <property type="status" value="ALT_SEQ"/>
    <property type="molecule type" value="mRNA"/>
</dbReference>
<dbReference type="CCDS" id="CCDS12651.1">
    <molecule id="O96005-1"/>
</dbReference>
<dbReference type="CCDS" id="CCDS74394.1">
    <molecule id="O96005-4"/>
</dbReference>
<dbReference type="CCDS" id="CCDS74395.1">
    <molecule id="O96005-3"/>
</dbReference>
<dbReference type="RefSeq" id="NP_001269104.1">
    <molecule id="O96005-4"/>
    <property type="nucleotide sequence ID" value="NM_001282175.2"/>
</dbReference>
<dbReference type="RefSeq" id="NP_001269105.1">
    <molecule id="O96005-3"/>
    <property type="nucleotide sequence ID" value="NM_001282176.2"/>
</dbReference>
<dbReference type="RefSeq" id="NP_001285.1">
    <molecule id="O96005-1"/>
    <property type="nucleotide sequence ID" value="NM_001294.4"/>
</dbReference>
<dbReference type="BioGRID" id="107619">
    <property type="interactions" value="179"/>
</dbReference>
<dbReference type="FunCoup" id="O96005">
    <property type="interactions" value="2126"/>
</dbReference>
<dbReference type="IntAct" id="O96005">
    <property type="interactions" value="88"/>
</dbReference>
<dbReference type="MINT" id="O96005"/>
<dbReference type="STRING" id="9606.ENSP00000336994"/>
<dbReference type="TCDB" id="8.A.125.1.1">
    <property type="family name" value="the cleft lip and palate transmembrane protein 1 (clptm1) family"/>
</dbReference>
<dbReference type="GlyConnect" id="1116">
    <property type="glycosylation" value="5 N-Linked glycans (1 site)"/>
</dbReference>
<dbReference type="GlyCosmos" id="O96005">
    <property type="glycosylation" value="6 sites, 5 glycans"/>
</dbReference>
<dbReference type="GlyGen" id="O96005">
    <property type="glycosylation" value="14 sites, 20 N-linked glycans (3 sites), 2 O-linked glycans (4 sites)"/>
</dbReference>
<dbReference type="iPTMnet" id="O96005"/>
<dbReference type="MetOSite" id="O96005"/>
<dbReference type="PhosphoSitePlus" id="O96005"/>
<dbReference type="SwissPalm" id="O96005"/>
<dbReference type="BioMuta" id="CLPTM1"/>
<dbReference type="jPOST" id="O96005"/>
<dbReference type="MassIVE" id="O96005"/>
<dbReference type="PaxDb" id="9606-ENSP00000336994"/>
<dbReference type="PeptideAtlas" id="O96005"/>
<dbReference type="ProteomicsDB" id="27801"/>
<dbReference type="ProteomicsDB" id="3887"/>
<dbReference type="ProteomicsDB" id="51184">
    <molecule id="O96005-1"/>
</dbReference>
<dbReference type="Pumba" id="O96005"/>
<dbReference type="TopDownProteomics" id="O96005-1">
    <molecule id="O96005-1"/>
</dbReference>
<dbReference type="Antibodypedia" id="31237">
    <property type="antibodies" value="171 antibodies from 29 providers"/>
</dbReference>
<dbReference type="DNASU" id="1209"/>
<dbReference type="Ensembl" id="ENST00000337392.10">
    <molecule id="O96005-1"/>
    <property type="protein sequence ID" value="ENSP00000336994.4"/>
    <property type="gene ID" value="ENSG00000104853.16"/>
</dbReference>
<dbReference type="Ensembl" id="ENST00000541297.6">
    <molecule id="O96005-4"/>
    <property type="protein sequence ID" value="ENSP00000442011.1"/>
    <property type="gene ID" value="ENSG00000104853.16"/>
</dbReference>
<dbReference type="Ensembl" id="ENST00000546079.5">
    <molecule id="O96005-3"/>
    <property type="protein sequence ID" value="ENSP00000443192.1"/>
    <property type="gene ID" value="ENSG00000104853.16"/>
</dbReference>
<dbReference type="GeneID" id="1209"/>
<dbReference type="KEGG" id="hsa:1209"/>
<dbReference type="MANE-Select" id="ENST00000337392.10">
    <property type="protein sequence ID" value="ENSP00000336994.4"/>
    <property type="RefSeq nucleotide sequence ID" value="NM_001294.4"/>
    <property type="RefSeq protein sequence ID" value="NP_001285.1"/>
</dbReference>
<dbReference type="UCSC" id="uc002pai.5">
    <molecule id="O96005-1"/>
    <property type="organism name" value="human"/>
</dbReference>
<dbReference type="AGR" id="HGNC:2087"/>
<dbReference type="CTD" id="1209"/>
<dbReference type="DisGeNET" id="1209"/>
<dbReference type="GeneCards" id="CLPTM1"/>
<dbReference type="HGNC" id="HGNC:2087">
    <property type="gene designation" value="CLPTM1"/>
</dbReference>
<dbReference type="HPA" id="ENSG00000104853">
    <property type="expression patterns" value="Low tissue specificity"/>
</dbReference>
<dbReference type="MIM" id="604783">
    <property type="type" value="gene"/>
</dbReference>
<dbReference type="neXtProt" id="NX_O96005"/>
<dbReference type="OpenTargets" id="ENSG00000104853"/>
<dbReference type="PharmGKB" id="PA26613"/>
<dbReference type="VEuPathDB" id="HostDB:ENSG00000104853"/>
<dbReference type="eggNOG" id="KOG2489">
    <property type="taxonomic scope" value="Eukaryota"/>
</dbReference>
<dbReference type="GeneTree" id="ENSGT00530000063461"/>
<dbReference type="HOGENOM" id="CLU_019907_3_1_1"/>
<dbReference type="InParanoid" id="O96005"/>
<dbReference type="OMA" id="TLWAHFY"/>
<dbReference type="OrthoDB" id="378564at2759"/>
<dbReference type="PAN-GO" id="O96005">
    <property type="GO annotations" value="1 GO annotation based on evolutionary models"/>
</dbReference>
<dbReference type="PhylomeDB" id="O96005"/>
<dbReference type="TreeFam" id="TF318501"/>
<dbReference type="PathwayCommons" id="O96005"/>
<dbReference type="SignaLink" id="O96005"/>
<dbReference type="BioGRID-ORCS" id="1209">
    <property type="hits" value="23 hits in 1156 CRISPR screens"/>
</dbReference>
<dbReference type="CD-CODE" id="91857CE7">
    <property type="entry name" value="Nucleolus"/>
</dbReference>
<dbReference type="ChiTaRS" id="CLPTM1">
    <property type="organism name" value="human"/>
</dbReference>
<dbReference type="GeneWiki" id="Cleft_lip_and_palate_transmembrane_protein_1"/>
<dbReference type="GenomeRNAi" id="1209"/>
<dbReference type="Pharos" id="O96005">
    <property type="development level" value="Tbio"/>
</dbReference>
<dbReference type="PRO" id="PR:O96005"/>
<dbReference type="Proteomes" id="UP000005640">
    <property type="component" value="Chromosome 19"/>
</dbReference>
<dbReference type="RNAct" id="O96005">
    <property type="molecule type" value="protein"/>
</dbReference>
<dbReference type="Bgee" id="ENSG00000104853">
    <property type="expression patterns" value="Expressed in right adrenal gland cortex and 198 other cell types or tissues"/>
</dbReference>
<dbReference type="ExpressionAtlas" id="O96005">
    <property type="expression patterns" value="baseline and differential"/>
</dbReference>
<dbReference type="GO" id="GO:0012505">
    <property type="term" value="C:endomembrane system"/>
    <property type="evidence" value="ECO:0000318"/>
    <property type="project" value="GO_Central"/>
</dbReference>
<dbReference type="GO" id="GO:0009897">
    <property type="term" value="C:external side of plasma membrane"/>
    <property type="evidence" value="ECO:0000250"/>
    <property type="project" value="BHF-UCL"/>
</dbReference>
<dbReference type="GO" id="GO:0016020">
    <property type="term" value="C:membrane"/>
    <property type="evidence" value="ECO:0007005"/>
    <property type="project" value="UniProtKB"/>
</dbReference>
<dbReference type="GO" id="GO:0005886">
    <property type="term" value="C:plasma membrane"/>
    <property type="evidence" value="ECO:0000304"/>
    <property type="project" value="ProtInc"/>
</dbReference>
<dbReference type="GO" id="GO:0050811">
    <property type="term" value="F:GABA receptor binding"/>
    <property type="evidence" value="ECO:0007669"/>
    <property type="project" value="Ensembl"/>
</dbReference>
<dbReference type="GO" id="GO:0030154">
    <property type="term" value="P:cell differentiation"/>
    <property type="evidence" value="ECO:0007669"/>
    <property type="project" value="UniProtKB-KW"/>
</dbReference>
<dbReference type="GO" id="GO:0033081">
    <property type="term" value="P:regulation of T cell differentiation in thymus"/>
    <property type="evidence" value="ECO:0000250"/>
    <property type="project" value="BHF-UCL"/>
</dbReference>
<dbReference type="InterPro" id="IPR008429">
    <property type="entry name" value="CLPTM1"/>
</dbReference>
<dbReference type="PANTHER" id="PTHR21347">
    <property type="entry name" value="CLEFT LIP AND PALATE ASSOCIATED TRANSMEMBRANE PROTEIN-RELATED"/>
    <property type="match status" value="1"/>
</dbReference>
<dbReference type="PANTHER" id="PTHR21347:SF14">
    <property type="entry name" value="LIPID SCRAMBLASE CLPTM1-RELATED"/>
    <property type="match status" value="1"/>
</dbReference>
<dbReference type="Pfam" id="PF05602">
    <property type="entry name" value="CLPTM1"/>
    <property type="match status" value="1"/>
</dbReference>
<protein>
    <recommendedName>
        <fullName evidence="12">Putative lipid scramblase CLPTM1</fullName>
    </recommendedName>
    <alternativeName>
        <fullName>Cleft lip and palate transmembrane protein 1</fullName>
    </alternativeName>
</protein>